<reference key="1">
    <citation type="journal article" date="2001" name="Proc. Natl. Acad. Sci. U.S.A.">
        <title>The complete genome of the crenarchaeon Sulfolobus solfataricus P2.</title>
        <authorList>
            <person name="She Q."/>
            <person name="Singh R.K."/>
            <person name="Confalonieri F."/>
            <person name="Zivanovic Y."/>
            <person name="Allard G."/>
            <person name="Awayez M.J."/>
            <person name="Chan-Weiher C.C.-Y."/>
            <person name="Clausen I.G."/>
            <person name="Curtis B.A."/>
            <person name="De Moors A."/>
            <person name="Erauso G."/>
            <person name="Fletcher C."/>
            <person name="Gordon P.M.K."/>
            <person name="Heikamp-de Jong I."/>
            <person name="Jeffries A.C."/>
            <person name="Kozera C.J."/>
            <person name="Medina N."/>
            <person name="Peng X."/>
            <person name="Thi-Ngoc H.P."/>
            <person name="Redder P."/>
            <person name="Schenk M.E."/>
            <person name="Theriault C."/>
            <person name="Tolstrup N."/>
            <person name="Charlebois R.L."/>
            <person name="Doolittle W.F."/>
            <person name="Duguet M."/>
            <person name="Gaasterland T."/>
            <person name="Garrett R.A."/>
            <person name="Ragan M.A."/>
            <person name="Sensen C.W."/>
            <person name="Van der Oost J."/>
        </authorList>
    </citation>
    <scope>NUCLEOTIDE SEQUENCE [LARGE SCALE GENOMIC DNA]</scope>
    <source>
        <strain>ATCC 35092 / DSM 1617 / JCM 11322 / P2</strain>
    </source>
</reference>
<reference key="2">
    <citation type="journal article" date="2012" name="Biosci. Rep.">
        <title>An archaeal protein evolutionarily conserved in prokaryotes is a zinc-dependent metalloprotease.</title>
        <authorList>
            <person name="Hu Y."/>
            <person name="Peng N."/>
            <person name="Han W."/>
            <person name="Mei Y."/>
            <person name="Chen Z."/>
            <person name="Feng X."/>
            <person name="Liang Y.X."/>
            <person name="She Q."/>
        </authorList>
    </citation>
    <scope>FUNCTION</scope>
    <scope>BIOPHYSICOCHEMICAL PROPERTIES</scope>
    <scope>COFACTOR</scope>
    <scope>MUTAGENESIS OF HIS-228; GLU-229; HIS-233 AND CYS-416</scope>
    <source>
        <strain>ATCC 35092 / DSM 1617 / JCM 11322 / P2</strain>
    </source>
</reference>
<protein>
    <recommendedName>
        <fullName>Zinc metalloprotease TldD homolog</fullName>
        <ecNumber>3.4.-.-</ecNumber>
    </recommendedName>
</protein>
<proteinExistence type="evidence at protein level"/>
<keyword id="KW-0378">Hydrolase</keyword>
<keyword id="KW-0482">Metalloprotease</keyword>
<keyword id="KW-0645">Protease</keyword>
<keyword id="KW-1185">Reference proteome</keyword>
<comment type="function">
    <text evidence="1">Zinc metalloprotease. Able to degrade azocasein in vitro.</text>
</comment>
<comment type="cofactor">
    <cofactor evidence="1">
        <name>Zn(2+)</name>
        <dbReference type="ChEBI" id="CHEBI:29105"/>
    </cofactor>
</comment>
<comment type="biophysicochemical properties">
    <phDependence>
        <text evidence="1">Optimum pH is 7.0.</text>
    </phDependence>
    <temperatureDependence>
        <text evidence="1">Optimum temperature is 55-65 degrees Celsius.</text>
    </temperatureDependence>
</comment>
<comment type="subunit">
    <text>Homodimer.</text>
</comment>
<comment type="domain">
    <text evidence="1">The HEAIGH motif probably functions as the active center of the metalloprotease.</text>
</comment>
<comment type="similarity">
    <text evidence="2">Belongs to the peptidase U62 family.</text>
</comment>
<accession>Q7LXP6</accession>
<gene>
    <name type="primary">tldD</name>
    <name type="ordered locus">SSO0660</name>
</gene>
<evidence type="ECO:0000269" key="1">
    <source>
    </source>
</evidence>
<evidence type="ECO:0000305" key="2"/>
<sequence length="443" mass="49882">MFKYIKKAEELGASFADIRYERVIANEVTITEDRKYVSHGVDEGYSIRVIYNRNWGFKATDKITENEIEDTINHIYGDERVNIVYLPSKHDTIKIGKDINKNEEEKINDLHKVASQVNTLHPSIKSYSIKYYDEIFHKEYYSSEDREIIADGSSSSLSILVVAREGDVTVEVSEILSTQMGYIFDVFDINQVLANLQKRIINQLKGSTPKAGEYPVILAPEVVGIFTHEAIGHLSEADVTLNGSLYKLRNKRIGDEFLNISDLPAMDHPQSSLVYYDDEGVEGREVKIIENGILKEFMTDRYYSAYLGQPPTGNARAQSYRNFSLIRMRNTYMKPGDASLNELFEGIKEGYYLVSPIGGETSSNGTFQFAIQEGYRVENSEIKEPLRNIGISGNTISTLNAIEMISKDFGMSSGFCEKNGQTVQVSNGGPHIKVKKLKVGGYV</sequence>
<organism>
    <name type="scientific">Saccharolobus solfataricus (strain ATCC 35092 / DSM 1617 / JCM 11322 / P2)</name>
    <name type="common">Sulfolobus solfataricus</name>
    <dbReference type="NCBI Taxonomy" id="273057"/>
    <lineage>
        <taxon>Archaea</taxon>
        <taxon>Thermoproteota</taxon>
        <taxon>Thermoprotei</taxon>
        <taxon>Sulfolobales</taxon>
        <taxon>Sulfolobaceae</taxon>
        <taxon>Saccharolobus</taxon>
    </lineage>
</organism>
<name>TLDD_SACS2</name>
<dbReference type="EC" id="3.4.-.-"/>
<dbReference type="EMBL" id="AE006641">
    <property type="protein sequence ID" value="AAK40965.1"/>
    <property type="molecule type" value="Genomic_DNA"/>
</dbReference>
<dbReference type="PIR" id="F90213">
    <property type="entry name" value="F90213"/>
</dbReference>
<dbReference type="RefSeq" id="WP_009991202.1">
    <property type="nucleotide sequence ID" value="NC_002754.1"/>
</dbReference>
<dbReference type="SMR" id="Q7LXP6"/>
<dbReference type="STRING" id="273057.SSO0660"/>
<dbReference type="PaxDb" id="273057-SSO0660"/>
<dbReference type="EnsemblBacteria" id="AAK40965">
    <property type="protein sequence ID" value="AAK40965"/>
    <property type="gene ID" value="SSO0660"/>
</dbReference>
<dbReference type="GeneID" id="44129657"/>
<dbReference type="KEGG" id="sso:SSO0660"/>
<dbReference type="PATRIC" id="fig|273057.12.peg.662"/>
<dbReference type="eggNOG" id="arCOG00321">
    <property type="taxonomic scope" value="Archaea"/>
</dbReference>
<dbReference type="HOGENOM" id="CLU_026425_1_2_2"/>
<dbReference type="InParanoid" id="Q7LXP6"/>
<dbReference type="PhylomeDB" id="Q7LXP6"/>
<dbReference type="BRENDA" id="3.4.24.B29">
    <property type="organism ID" value="6163"/>
</dbReference>
<dbReference type="Proteomes" id="UP000001974">
    <property type="component" value="Chromosome"/>
</dbReference>
<dbReference type="GO" id="GO:0005829">
    <property type="term" value="C:cytosol"/>
    <property type="evidence" value="ECO:0000318"/>
    <property type="project" value="GO_Central"/>
</dbReference>
<dbReference type="GO" id="GO:0008237">
    <property type="term" value="F:metallopeptidase activity"/>
    <property type="evidence" value="ECO:0000314"/>
    <property type="project" value="UniProtKB"/>
</dbReference>
<dbReference type="GO" id="GO:0042803">
    <property type="term" value="F:protein homodimerization activity"/>
    <property type="evidence" value="ECO:0000314"/>
    <property type="project" value="UniProtKB"/>
</dbReference>
<dbReference type="GO" id="GO:0008270">
    <property type="term" value="F:zinc ion binding"/>
    <property type="evidence" value="ECO:0000314"/>
    <property type="project" value="UniProtKB"/>
</dbReference>
<dbReference type="GO" id="GO:0006508">
    <property type="term" value="P:proteolysis"/>
    <property type="evidence" value="ECO:0000314"/>
    <property type="project" value="UniProtKB"/>
</dbReference>
<dbReference type="Gene3D" id="3.30.2290.10">
    <property type="entry name" value="PmbA/TldD superfamily"/>
    <property type="match status" value="1"/>
</dbReference>
<dbReference type="InterPro" id="IPR045569">
    <property type="entry name" value="Metalloprtase-TldD/E_C"/>
</dbReference>
<dbReference type="InterPro" id="IPR045570">
    <property type="entry name" value="Metalloprtase-TldD/E_cen_dom"/>
</dbReference>
<dbReference type="InterPro" id="IPR002510">
    <property type="entry name" value="Metalloprtase-TldD/E_N"/>
</dbReference>
<dbReference type="InterPro" id="IPR051463">
    <property type="entry name" value="Peptidase_U62_metallo"/>
</dbReference>
<dbReference type="InterPro" id="IPR025502">
    <property type="entry name" value="TldD"/>
</dbReference>
<dbReference type="InterPro" id="IPR035068">
    <property type="entry name" value="TldD/PmbA_N"/>
</dbReference>
<dbReference type="InterPro" id="IPR036059">
    <property type="entry name" value="TldD/PmbA_sf"/>
</dbReference>
<dbReference type="InterPro" id="IPR053642">
    <property type="entry name" value="Zinc_metalloprotease_TldD"/>
</dbReference>
<dbReference type="NCBIfam" id="NF040952">
    <property type="entry name" value="Arch_mtprotase_TldD"/>
    <property type="match status" value="1"/>
</dbReference>
<dbReference type="PANTHER" id="PTHR30624:SF0">
    <property type="entry name" value="METALLOPROTEASE SLR0863"/>
    <property type="match status" value="1"/>
</dbReference>
<dbReference type="PANTHER" id="PTHR30624">
    <property type="entry name" value="UNCHARACTERIZED PROTEIN TLDD AND PMBA"/>
    <property type="match status" value="1"/>
</dbReference>
<dbReference type="Pfam" id="PF01523">
    <property type="entry name" value="PmbA_TldD_1st"/>
    <property type="match status" value="1"/>
</dbReference>
<dbReference type="Pfam" id="PF19290">
    <property type="entry name" value="PmbA_TldD_2nd"/>
    <property type="match status" value="1"/>
</dbReference>
<dbReference type="Pfam" id="PF19289">
    <property type="entry name" value="PmbA_TldD_3rd"/>
    <property type="match status" value="1"/>
</dbReference>
<dbReference type="PIRSF" id="PIRSF004919">
    <property type="entry name" value="TldD"/>
    <property type="match status" value="1"/>
</dbReference>
<dbReference type="SUPFAM" id="SSF111283">
    <property type="entry name" value="Putative modulator of DNA gyrase, PmbA/TldD"/>
    <property type="match status" value="1"/>
</dbReference>
<feature type="chain" id="PRO_0000429058" description="Zinc metalloprotease TldD homolog">
    <location>
        <begin position="1"/>
        <end position="443"/>
    </location>
</feature>
<feature type="short sequence motif" description="HEAIGH motif">
    <location>
        <begin position="228"/>
        <end position="233"/>
    </location>
</feature>
<feature type="mutagenesis site" description="Abolishes metalloprotease activity. Does not affect homodimerization." evidence="1">
    <original>H</original>
    <variation>F</variation>
    <location>
        <position position="228"/>
    </location>
</feature>
<feature type="mutagenesis site" description="Abolishes metalloprotease activity. Does not affect homodimerization." evidence="1">
    <original>E</original>
    <variation>D</variation>
    <location>
        <position position="229"/>
    </location>
</feature>
<feature type="mutagenesis site" description="Abolishes metalloprotease activity. Does not affect homodimerization." evidence="1">
    <original>H</original>
    <variation>Y</variation>
    <location>
        <position position="233"/>
    </location>
</feature>
<feature type="mutagenesis site" description="Abolishes metalloprotease activity and homodimerization." evidence="1">
    <original>C</original>
    <variation>G</variation>
    <location>
        <position position="416"/>
    </location>
</feature>